<accession>Q8YXQ0</accession>
<organism>
    <name type="scientific">Nostoc sp. (strain PCC 7120 / SAG 25.82 / UTEX 2576)</name>
    <dbReference type="NCBI Taxonomy" id="103690"/>
    <lineage>
        <taxon>Bacteria</taxon>
        <taxon>Bacillati</taxon>
        <taxon>Cyanobacteriota</taxon>
        <taxon>Cyanophyceae</taxon>
        <taxon>Nostocales</taxon>
        <taxon>Nostocaceae</taxon>
        <taxon>Nostoc</taxon>
    </lineage>
</organism>
<gene>
    <name evidence="1" type="primary">queF</name>
    <name type="ordered locus">all1162</name>
</gene>
<evidence type="ECO:0000255" key="1">
    <source>
        <dbReference type="HAMAP-Rule" id="MF_00818"/>
    </source>
</evidence>
<dbReference type="EC" id="1.7.1.13" evidence="1"/>
<dbReference type="EMBL" id="BA000019">
    <property type="protein sequence ID" value="BAB73119.1"/>
    <property type="molecule type" value="Genomic_DNA"/>
</dbReference>
<dbReference type="PIR" id="AG1951">
    <property type="entry name" value="AG1951"/>
</dbReference>
<dbReference type="RefSeq" id="WP_010995335.1">
    <property type="nucleotide sequence ID" value="NZ_RSCN01000008.1"/>
</dbReference>
<dbReference type="SMR" id="Q8YXQ0"/>
<dbReference type="STRING" id="103690.gene:10493176"/>
<dbReference type="KEGG" id="ana:all1162"/>
<dbReference type="eggNOG" id="COG0780">
    <property type="taxonomic scope" value="Bacteria"/>
</dbReference>
<dbReference type="OrthoDB" id="9795077at2"/>
<dbReference type="UniPathway" id="UPA00392"/>
<dbReference type="Proteomes" id="UP000002483">
    <property type="component" value="Chromosome"/>
</dbReference>
<dbReference type="GO" id="GO:0005737">
    <property type="term" value="C:cytoplasm"/>
    <property type="evidence" value="ECO:0007669"/>
    <property type="project" value="UniProtKB-SubCell"/>
</dbReference>
<dbReference type="GO" id="GO:0033739">
    <property type="term" value="F:preQ1 synthase activity"/>
    <property type="evidence" value="ECO:0007669"/>
    <property type="project" value="UniProtKB-UniRule"/>
</dbReference>
<dbReference type="GO" id="GO:0008616">
    <property type="term" value="P:queuosine biosynthetic process"/>
    <property type="evidence" value="ECO:0007669"/>
    <property type="project" value="UniProtKB-UniRule"/>
</dbReference>
<dbReference type="GO" id="GO:0006400">
    <property type="term" value="P:tRNA modification"/>
    <property type="evidence" value="ECO:0007669"/>
    <property type="project" value="UniProtKB-UniRule"/>
</dbReference>
<dbReference type="Gene3D" id="3.30.1130.10">
    <property type="match status" value="1"/>
</dbReference>
<dbReference type="HAMAP" id="MF_00818">
    <property type="entry name" value="QueF_type1"/>
    <property type="match status" value="1"/>
</dbReference>
<dbReference type="InterPro" id="IPR043133">
    <property type="entry name" value="GTP-CH-I_C/QueF"/>
</dbReference>
<dbReference type="InterPro" id="IPR050084">
    <property type="entry name" value="NADPH_dep_7-cyano-7-deazaG_red"/>
</dbReference>
<dbReference type="InterPro" id="IPR029500">
    <property type="entry name" value="QueF"/>
</dbReference>
<dbReference type="InterPro" id="IPR016856">
    <property type="entry name" value="QueF_type1"/>
</dbReference>
<dbReference type="NCBIfam" id="TIGR03139">
    <property type="entry name" value="QueF-II"/>
    <property type="match status" value="1"/>
</dbReference>
<dbReference type="PANTHER" id="PTHR34354">
    <property type="entry name" value="NADPH-DEPENDENT 7-CYANO-7-DEAZAGUANINE REDUCTASE"/>
    <property type="match status" value="1"/>
</dbReference>
<dbReference type="PANTHER" id="PTHR34354:SF1">
    <property type="entry name" value="NADPH-DEPENDENT 7-CYANO-7-DEAZAGUANINE REDUCTASE"/>
    <property type="match status" value="1"/>
</dbReference>
<dbReference type="Pfam" id="PF14489">
    <property type="entry name" value="QueF"/>
    <property type="match status" value="1"/>
</dbReference>
<dbReference type="PIRSF" id="PIRSF027377">
    <property type="entry name" value="Nitrile_oxidored_QueF"/>
    <property type="match status" value="1"/>
</dbReference>
<dbReference type="SUPFAM" id="SSF55620">
    <property type="entry name" value="Tetrahydrobiopterin biosynthesis enzymes-like"/>
    <property type="match status" value="1"/>
</dbReference>
<reference key="1">
    <citation type="journal article" date="2001" name="DNA Res.">
        <title>Complete genomic sequence of the filamentous nitrogen-fixing cyanobacterium Anabaena sp. strain PCC 7120.</title>
        <authorList>
            <person name="Kaneko T."/>
            <person name="Nakamura Y."/>
            <person name="Wolk C.P."/>
            <person name="Kuritz T."/>
            <person name="Sasamoto S."/>
            <person name="Watanabe A."/>
            <person name="Iriguchi M."/>
            <person name="Ishikawa A."/>
            <person name="Kawashima K."/>
            <person name="Kimura T."/>
            <person name="Kishida Y."/>
            <person name="Kohara M."/>
            <person name="Matsumoto M."/>
            <person name="Matsuno A."/>
            <person name="Muraki A."/>
            <person name="Nakazaki N."/>
            <person name="Shimpo S."/>
            <person name="Sugimoto M."/>
            <person name="Takazawa M."/>
            <person name="Yamada M."/>
            <person name="Yasuda M."/>
            <person name="Tabata S."/>
        </authorList>
    </citation>
    <scope>NUCLEOTIDE SEQUENCE [LARGE SCALE GENOMIC DNA]</scope>
    <source>
        <strain>PCC 7120 / SAG 25.82 / UTEX 2576</strain>
    </source>
</reference>
<name>QUEF_NOSS1</name>
<feature type="chain" id="PRO_0000162948" description="NADPH-dependent 7-cyano-7-deazaguanine reductase">
    <location>
        <begin position="1"/>
        <end position="136"/>
    </location>
</feature>
<feature type="active site" description="Thioimide intermediate" evidence="1">
    <location>
        <position position="53"/>
    </location>
</feature>
<feature type="active site" description="Proton donor" evidence="1">
    <location>
        <position position="60"/>
    </location>
</feature>
<feature type="binding site" evidence="1">
    <location>
        <begin position="75"/>
        <end position="77"/>
    </location>
    <ligand>
        <name>substrate</name>
    </ligand>
</feature>
<feature type="binding site" evidence="1">
    <location>
        <begin position="94"/>
        <end position="95"/>
    </location>
    <ligand>
        <name>substrate</name>
    </ligand>
</feature>
<keyword id="KW-0963">Cytoplasm</keyword>
<keyword id="KW-0521">NADP</keyword>
<keyword id="KW-0560">Oxidoreductase</keyword>
<keyword id="KW-0671">Queuosine biosynthesis</keyword>
<keyword id="KW-1185">Reference proteome</keyword>
<comment type="function">
    <text evidence="1">Catalyzes the NADPH-dependent reduction of 7-cyano-7-deazaguanine (preQ0) to 7-aminomethyl-7-deazaguanine (preQ1).</text>
</comment>
<comment type="catalytic activity">
    <reaction evidence="1">
        <text>7-aminomethyl-7-carbaguanine + 2 NADP(+) = 7-cyano-7-deazaguanine + 2 NADPH + 3 H(+)</text>
        <dbReference type="Rhea" id="RHEA:13409"/>
        <dbReference type="ChEBI" id="CHEBI:15378"/>
        <dbReference type="ChEBI" id="CHEBI:45075"/>
        <dbReference type="ChEBI" id="CHEBI:57783"/>
        <dbReference type="ChEBI" id="CHEBI:58349"/>
        <dbReference type="ChEBI" id="CHEBI:58703"/>
        <dbReference type="EC" id="1.7.1.13"/>
    </reaction>
</comment>
<comment type="pathway">
    <text evidence="1">tRNA modification; tRNA-queuosine biosynthesis.</text>
</comment>
<comment type="subcellular location">
    <subcellularLocation>
        <location evidence="1">Cytoplasm</location>
    </subcellularLocation>
</comment>
<comment type="similarity">
    <text evidence="1">Belongs to the GTP cyclohydrolase I family. QueF type 1 subfamily.</text>
</comment>
<protein>
    <recommendedName>
        <fullName evidence="1">NADPH-dependent 7-cyano-7-deazaguanine reductase</fullName>
        <ecNumber evidence="1">1.7.1.13</ecNumber>
    </recommendedName>
    <alternativeName>
        <fullName evidence="1">7-cyano-7-carbaguanine reductase</fullName>
    </alternativeName>
    <alternativeName>
        <fullName evidence="1">NADPH-dependent nitrile oxidoreductase</fullName>
    </alternativeName>
    <alternativeName>
        <fullName evidence="1">PreQ(0) reductase</fullName>
    </alternativeName>
</protein>
<proteinExistence type="inferred from homology"/>
<sequence length="136" mass="15533">MSNSSPETVSQPSQEVKYGEREIAEGQLITFPNPRVGRRYDINITLPEFTCKCPFSGYPDFATIYITYVPDERVVELKALKLYINSYRDRYISHEESANQILDDFVAACDPLEANVKADFTPRGNVHTVVEVRHTK</sequence>